<proteinExistence type="inferred from homology"/>
<sequence length="510" mass="58198">MEEELICRGFDSVEVLFVDVFEKSRLSVGGDGERMLQTPQTGSLMLSSLLTTRRTISSMAALQQPSRHRFPPPNNIQRLPLRPDGQQEPIKLTEAIKQQFKQSIPLLAARVPSPSITKFKTNPEIRKALLNSKNLRSVEPDPDSTDNAFKLLLLNTPHKDQIPESTLKVFQEHDIQIKNTKLDLDWEYWMADEIIERLLPDQLTDIPASFTMIGHIAHFNLRDEYLPYKYLIGQVILEKNLAIKTVVNKIDNINSQFRFFEMELLAGEPDYTVTLWQSGCRYRFDFSKVYYNPRLSTEHDLLSSMIEKDEVVVDAFAGVGPFAMRAAANRKAWVLASDLNPASVEALETNVRLNKLQGRVAVSGGDGREKIREAVRTLWLDKPFKTPNSSPLLPDHFIINLPDSSIQFLDAFRDLYHPLSDSEGFLNAVKKKSRLPLLHCYCFTKQVDEPESDICQRVSEVMKVEISPSTVARFELKFVRAVAPHKDMYRITFELPLKLLFSSSSEESRA</sequence>
<accession>E3KWE1</accession>
<keyword id="KW-0963">Cytoplasm</keyword>
<keyword id="KW-0489">Methyltransferase</keyword>
<keyword id="KW-0496">Mitochondrion</keyword>
<keyword id="KW-0539">Nucleus</keyword>
<keyword id="KW-1185">Reference proteome</keyword>
<keyword id="KW-0949">S-adenosyl-L-methionine</keyword>
<keyword id="KW-0808">Transferase</keyword>
<keyword id="KW-0819">tRNA processing</keyword>
<protein>
    <recommendedName>
        <fullName evidence="1">tRNA (guanine(37)-N(1))-methyltransferase</fullName>
        <ecNumber evidence="1">2.1.1.228</ecNumber>
    </recommendedName>
    <alternativeName>
        <fullName evidence="1">M1G-methyltransferase</fullName>
    </alternativeName>
    <alternativeName>
        <fullName evidence="1">tRNA [GM37] methyltransferase</fullName>
    </alternativeName>
    <alternativeName>
        <fullName evidence="1">tRNA methyltransferase 5</fullName>
    </alternativeName>
</protein>
<name>TRM5_PUCGT</name>
<gene>
    <name evidence="1" type="primary">TRM5</name>
    <name type="ORF">PGTG_14821</name>
</gene>
<organism>
    <name type="scientific">Puccinia graminis f. sp. tritici (strain CRL 75-36-700-3 / race SCCL)</name>
    <name type="common">Black stem rust fungus</name>
    <dbReference type="NCBI Taxonomy" id="418459"/>
    <lineage>
        <taxon>Eukaryota</taxon>
        <taxon>Fungi</taxon>
        <taxon>Dikarya</taxon>
        <taxon>Basidiomycota</taxon>
        <taxon>Pucciniomycotina</taxon>
        <taxon>Pucciniomycetes</taxon>
        <taxon>Pucciniales</taxon>
        <taxon>Pucciniaceae</taxon>
        <taxon>Puccinia</taxon>
    </lineage>
</organism>
<evidence type="ECO:0000255" key="1">
    <source>
        <dbReference type="HAMAP-Rule" id="MF_03152"/>
    </source>
</evidence>
<evidence type="ECO:0000256" key="2">
    <source>
        <dbReference type="SAM" id="MobiDB-lite"/>
    </source>
</evidence>
<evidence type="ECO:0000305" key="3"/>
<dbReference type="EC" id="2.1.1.228" evidence="1"/>
<dbReference type="EMBL" id="DS178315">
    <property type="protein sequence ID" value="EFP88616.2"/>
    <property type="molecule type" value="Genomic_DNA"/>
</dbReference>
<dbReference type="RefSeq" id="XP_003333035.2">
    <property type="nucleotide sequence ID" value="XM_003332987.2"/>
</dbReference>
<dbReference type="SMR" id="E3KWE1"/>
<dbReference type="FunCoup" id="E3KWE1">
    <property type="interactions" value="366"/>
</dbReference>
<dbReference type="EnsemblFungi" id="EFP88616">
    <property type="protein sequence ID" value="EFP88616"/>
    <property type="gene ID" value="PGTG_14821"/>
</dbReference>
<dbReference type="GeneID" id="10541244"/>
<dbReference type="KEGG" id="pgr:PGTG_14821"/>
<dbReference type="VEuPathDB" id="FungiDB:PGTG_14821"/>
<dbReference type="eggNOG" id="KOG2078">
    <property type="taxonomic scope" value="Eukaryota"/>
</dbReference>
<dbReference type="HOGENOM" id="CLU_022610_2_3_1"/>
<dbReference type="InParanoid" id="E3KWE1"/>
<dbReference type="OrthoDB" id="408788at2759"/>
<dbReference type="Proteomes" id="UP000008783">
    <property type="component" value="Unassembled WGS sequence"/>
</dbReference>
<dbReference type="GO" id="GO:0005737">
    <property type="term" value="C:cytoplasm"/>
    <property type="evidence" value="ECO:0000318"/>
    <property type="project" value="GO_Central"/>
</dbReference>
<dbReference type="GO" id="GO:0005759">
    <property type="term" value="C:mitochondrial matrix"/>
    <property type="evidence" value="ECO:0000318"/>
    <property type="project" value="GO_Central"/>
</dbReference>
<dbReference type="GO" id="GO:0005634">
    <property type="term" value="C:nucleus"/>
    <property type="evidence" value="ECO:0007669"/>
    <property type="project" value="UniProtKB-SubCell"/>
</dbReference>
<dbReference type="GO" id="GO:0052906">
    <property type="term" value="F:tRNA (guanine(37)-N1)-methyltransferase activity"/>
    <property type="evidence" value="ECO:0007669"/>
    <property type="project" value="UniProtKB-UniRule"/>
</dbReference>
<dbReference type="GO" id="GO:0008175">
    <property type="term" value="F:tRNA methyltransferase activity"/>
    <property type="evidence" value="ECO:0000318"/>
    <property type="project" value="GO_Central"/>
</dbReference>
<dbReference type="GO" id="GO:0070901">
    <property type="term" value="P:mitochondrial tRNA methylation"/>
    <property type="evidence" value="ECO:0000318"/>
    <property type="project" value="GO_Central"/>
</dbReference>
<dbReference type="GO" id="GO:0002939">
    <property type="term" value="P:tRNA N1-guanine methylation"/>
    <property type="evidence" value="ECO:0000318"/>
    <property type="project" value="GO_Central"/>
</dbReference>
<dbReference type="CDD" id="cd02440">
    <property type="entry name" value="AdoMet_MTases"/>
    <property type="match status" value="1"/>
</dbReference>
<dbReference type="FunFam" id="3.30.300.110:FF:000001">
    <property type="entry name" value="tRNA (guanine(37)-N1)-methyltransferase"/>
    <property type="match status" value="1"/>
</dbReference>
<dbReference type="Gene3D" id="3.30.300.110">
    <property type="entry name" value="Met-10+ protein-like domains"/>
    <property type="match status" value="1"/>
</dbReference>
<dbReference type="Gene3D" id="3.40.50.150">
    <property type="entry name" value="Vaccinia Virus protein VP39"/>
    <property type="match status" value="1"/>
</dbReference>
<dbReference type="HAMAP" id="MF_03152">
    <property type="entry name" value="TRM5"/>
    <property type="match status" value="1"/>
</dbReference>
<dbReference type="InterPro" id="IPR030382">
    <property type="entry name" value="MeTrfase_TRM5/TYW2"/>
</dbReference>
<dbReference type="InterPro" id="IPR029063">
    <property type="entry name" value="SAM-dependent_MTases_sf"/>
</dbReference>
<dbReference type="InterPro" id="IPR056743">
    <property type="entry name" value="TRM5-TYW2-like_MTfase"/>
</dbReference>
<dbReference type="InterPro" id="IPR056744">
    <property type="entry name" value="TRM5/TYW2-like_N"/>
</dbReference>
<dbReference type="InterPro" id="IPR025792">
    <property type="entry name" value="tRNA_Gua_MeTrfase_euk"/>
</dbReference>
<dbReference type="PANTHER" id="PTHR23245:SF36">
    <property type="entry name" value="TRNA (GUANINE(37)-N1)-METHYLTRANSFERASE"/>
    <property type="match status" value="1"/>
</dbReference>
<dbReference type="PANTHER" id="PTHR23245">
    <property type="entry name" value="TRNA METHYLTRANSFERASE"/>
    <property type="match status" value="1"/>
</dbReference>
<dbReference type="Pfam" id="PF02475">
    <property type="entry name" value="TRM5-TYW2_MTfase"/>
    <property type="match status" value="1"/>
</dbReference>
<dbReference type="Pfam" id="PF25133">
    <property type="entry name" value="TYW2_N_2"/>
    <property type="match status" value="1"/>
</dbReference>
<dbReference type="SUPFAM" id="SSF53335">
    <property type="entry name" value="S-adenosyl-L-methionine-dependent methyltransferases"/>
    <property type="match status" value="1"/>
</dbReference>
<dbReference type="PROSITE" id="PS51684">
    <property type="entry name" value="SAM_MT_TRM5_TYW2"/>
    <property type="match status" value="1"/>
</dbReference>
<comment type="function">
    <text evidence="1">Specifically methylates the N1 position of guanosine-37 in various cytoplasmic and mitochondrial tRNAs. Methylation is not dependent on the nature of the nucleoside 5' of the target nucleoside. This is the first step in the biosynthesis of wybutosine (yW), a modified base adjacent to the anticodon of tRNAs and required for accurate decoding.</text>
</comment>
<comment type="catalytic activity">
    <reaction evidence="1">
        <text>guanosine(37) in tRNA + S-adenosyl-L-methionine = N(1)-methylguanosine(37) in tRNA + S-adenosyl-L-homocysteine + H(+)</text>
        <dbReference type="Rhea" id="RHEA:36899"/>
        <dbReference type="Rhea" id="RHEA-COMP:10145"/>
        <dbReference type="Rhea" id="RHEA-COMP:10147"/>
        <dbReference type="ChEBI" id="CHEBI:15378"/>
        <dbReference type="ChEBI" id="CHEBI:57856"/>
        <dbReference type="ChEBI" id="CHEBI:59789"/>
        <dbReference type="ChEBI" id="CHEBI:73542"/>
        <dbReference type="ChEBI" id="CHEBI:74269"/>
        <dbReference type="EC" id="2.1.1.228"/>
    </reaction>
</comment>
<comment type="subunit">
    <text evidence="1">Monomer.</text>
</comment>
<comment type="subcellular location">
    <subcellularLocation>
        <location evidence="1">Mitochondrion matrix</location>
    </subcellularLocation>
    <subcellularLocation>
        <location evidence="1">Nucleus</location>
    </subcellularLocation>
    <subcellularLocation>
        <location evidence="1">Cytoplasm</location>
    </subcellularLocation>
    <text evidence="1">Predominantly in the mitochondria and in the nucleus.</text>
</comment>
<comment type="similarity">
    <text evidence="3">Belongs to the class I-like SAM-binding methyltransferase superfamily. TRM5/TYW2 family.</text>
</comment>
<reference key="1">
    <citation type="journal article" date="2011" name="Proc. Natl. Acad. Sci. U.S.A.">
        <title>Obligate biotrophy features unraveled by the genomic analysis of rust fungi.</title>
        <authorList>
            <person name="Duplessis S."/>
            <person name="Cuomo C.A."/>
            <person name="Lin Y.-C."/>
            <person name="Aerts A."/>
            <person name="Tisserant E."/>
            <person name="Veneault-Fourrey C."/>
            <person name="Joly D.L."/>
            <person name="Hacquard S."/>
            <person name="Amselem J."/>
            <person name="Cantarel B.L."/>
            <person name="Chiu R."/>
            <person name="Coutinho P.M."/>
            <person name="Feau N."/>
            <person name="Field M."/>
            <person name="Frey P."/>
            <person name="Gelhaye E."/>
            <person name="Goldberg J."/>
            <person name="Grabherr M.G."/>
            <person name="Kodira C.D."/>
            <person name="Kohler A."/>
            <person name="Kuees U."/>
            <person name="Lindquist E.A."/>
            <person name="Lucas S.M."/>
            <person name="Mago R."/>
            <person name="Mauceli E."/>
            <person name="Morin E."/>
            <person name="Murat C."/>
            <person name="Pangilinan J.L."/>
            <person name="Park R."/>
            <person name="Pearson M."/>
            <person name="Quesneville H."/>
            <person name="Rouhier N."/>
            <person name="Sakthikumar S."/>
            <person name="Salamov A.A."/>
            <person name="Schmutz J."/>
            <person name="Selles B."/>
            <person name="Shapiro H."/>
            <person name="Tanguay P."/>
            <person name="Tuskan G.A."/>
            <person name="Henrissat B."/>
            <person name="Van de Peer Y."/>
            <person name="Rouze P."/>
            <person name="Ellis J.G."/>
            <person name="Dodds P.N."/>
            <person name="Schein J.E."/>
            <person name="Zhong S."/>
            <person name="Hamelin R.C."/>
            <person name="Grigoriev I.V."/>
            <person name="Szabo L.J."/>
            <person name="Martin F."/>
        </authorList>
    </citation>
    <scope>NUCLEOTIDE SEQUENCE [LARGE SCALE GENOMIC DNA]</scope>
    <source>
        <strain>CRL 75-36-700-3 / race SCCL</strain>
    </source>
</reference>
<reference key="2">
    <citation type="journal article" date="2017" name="G3 (Bethesda)">
        <title>Comparative analysis highlights variable genome content of wheat rusts and divergence of the mating loci.</title>
        <authorList>
            <person name="Cuomo C.A."/>
            <person name="Bakkeren G."/>
            <person name="Khalil H.B."/>
            <person name="Panwar V."/>
            <person name="Joly D."/>
            <person name="Linning R."/>
            <person name="Sakthikumar S."/>
            <person name="Song X."/>
            <person name="Adiconis X."/>
            <person name="Fan L."/>
            <person name="Goldberg J.M."/>
            <person name="Levin J.Z."/>
            <person name="Young S."/>
            <person name="Zeng Q."/>
            <person name="Anikster Y."/>
            <person name="Bruce M."/>
            <person name="Wang M."/>
            <person name="Yin C."/>
            <person name="McCallum B."/>
            <person name="Szabo L.J."/>
            <person name="Hulbert S."/>
            <person name="Chen X."/>
            <person name="Fellers J.P."/>
        </authorList>
    </citation>
    <scope>GENOME REANNOTATION</scope>
    <source>
        <strain>CRL 75-36-700-3 / race SCCL</strain>
    </source>
</reference>
<feature type="chain" id="PRO_0000414170" description="tRNA (guanine(37)-N(1))-methyltransferase">
    <location>
        <begin position="1"/>
        <end position="510"/>
    </location>
</feature>
<feature type="region of interest" description="Disordered" evidence="2">
    <location>
        <begin position="61"/>
        <end position="83"/>
    </location>
</feature>
<feature type="binding site" evidence="1">
    <location>
        <position position="299"/>
    </location>
    <ligand>
        <name>S-adenosyl-L-methionine</name>
        <dbReference type="ChEBI" id="CHEBI:59789"/>
    </ligand>
</feature>
<feature type="binding site" evidence="1">
    <location>
        <begin position="338"/>
        <end position="339"/>
    </location>
    <ligand>
        <name>S-adenosyl-L-methionine</name>
        <dbReference type="ChEBI" id="CHEBI:59789"/>
    </ligand>
</feature>
<feature type="binding site" evidence="1">
    <location>
        <begin position="366"/>
        <end position="367"/>
    </location>
    <ligand>
        <name>S-adenosyl-L-methionine</name>
        <dbReference type="ChEBI" id="CHEBI:59789"/>
    </ligand>
</feature>
<feature type="binding site" evidence="1">
    <location>
        <position position="400"/>
    </location>
    <ligand>
        <name>S-adenosyl-L-methionine</name>
        <dbReference type="ChEBI" id="CHEBI:59789"/>
    </ligand>
</feature>